<reference key="1">
    <citation type="journal article" date="2009" name="J. Bacteriol.">
        <title>Complete genome sequence of Haemophilus parasuis SH0165.</title>
        <authorList>
            <person name="Yue M."/>
            <person name="Yang F."/>
            <person name="Yang J."/>
            <person name="Bei W."/>
            <person name="Cai X."/>
            <person name="Chen L."/>
            <person name="Dong J."/>
            <person name="Zhou R."/>
            <person name="Jin M."/>
            <person name="Jin Q."/>
            <person name="Chen H."/>
        </authorList>
    </citation>
    <scope>NUCLEOTIDE SEQUENCE [LARGE SCALE GENOMIC DNA]</scope>
    <source>
        <strain>SH0165</strain>
    </source>
</reference>
<protein>
    <recommendedName>
        <fullName evidence="1">Large ribosomal subunit protein uL29</fullName>
    </recommendedName>
    <alternativeName>
        <fullName evidence="2">50S ribosomal protein L29</fullName>
    </alternativeName>
</protein>
<accession>B8F763</accession>
<evidence type="ECO:0000255" key="1">
    <source>
        <dbReference type="HAMAP-Rule" id="MF_00374"/>
    </source>
</evidence>
<evidence type="ECO:0000305" key="2"/>
<name>RL29_GLAP5</name>
<sequence length="63" mass="7147">MKAQELRNKSVEELNGELVNLLGEQFKLRMQAATGQLQQTHQLKQVRRSIAQVKTVLTEKAGE</sequence>
<comment type="similarity">
    <text evidence="1">Belongs to the universal ribosomal protein uL29 family.</text>
</comment>
<dbReference type="EMBL" id="CP001321">
    <property type="protein sequence ID" value="ACL33165.1"/>
    <property type="molecule type" value="Genomic_DNA"/>
</dbReference>
<dbReference type="RefSeq" id="WP_005711179.1">
    <property type="nucleotide sequence ID" value="NC_011852.1"/>
</dbReference>
<dbReference type="SMR" id="B8F763"/>
<dbReference type="STRING" id="557723.HAPS_1614"/>
<dbReference type="GeneID" id="67367804"/>
<dbReference type="KEGG" id="hap:HAPS_1614"/>
<dbReference type="HOGENOM" id="CLU_158491_1_2_6"/>
<dbReference type="Proteomes" id="UP000006743">
    <property type="component" value="Chromosome"/>
</dbReference>
<dbReference type="GO" id="GO:0022625">
    <property type="term" value="C:cytosolic large ribosomal subunit"/>
    <property type="evidence" value="ECO:0007669"/>
    <property type="project" value="TreeGrafter"/>
</dbReference>
<dbReference type="GO" id="GO:0003735">
    <property type="term" value="F:structural constituent of ribosome"/>
    <property type="evidence" value="ECO:0007669"/>
    <property type="project" value="InterPro"/>
</dbReference>
<dbReference type="GO" id="GO:0006412">
    <property type="term" value="P:translation"/>
    <property type="evidence" value="ECO:0007669"/>
    <property type="project" value="UniProtKB-UniRule"/>
</dbReference>
<dbReference type="CDD" id="cd00427">
    <property type="entry name" value="Ribosomal_L29_HIP"/>
    <property type="match status" value="1"/>
</dbReference>
<dbReference type="FunFam" id="1.10.287.310:FF:000001">
    <property type="entry name" value="50S ribosomal protein L29"/>
    <property type="match status" value="1"/>
</dbReference>
<dbReference type="Gene3D" id="1.10.287.310">
    <property type="match status" value="1"/>
</dbReference>
<dbReference type="HAMAP" id="MF_00374">
    <property type="entry name" value="Ribosomal_uL29"/>
    <property type="match status" value="1"/>
</dbReference>
<dbReference type="InterPro" id="IPR050063">
    <property type="entry name" value="Ribosomal_protein_uL29"/>
</dbReference>
<dbReference type="InterPro" id="IPR001854">
    <property type="entry name" value="Ribosomal_uL29"/>
</dbReference>
<dbReference type="InterPro" id="IPR018254">
    <property type="entry name" value="Ribosomal_uL29_CS"/>
</dbReference>
<dbReference type="InterPro" id="IPR036049">
    <property type="entry name" value="Ribosomal_uL29_sf"/>
</dbReference>
<dbReference type="NCBIfam" id="TIGR00012">
    <property type="entry name" value="L29"/>
    <property type="match status" value="1"/>
</dbReference>
<dbReference type="PANTHER" id="PTHR10916">
    <property type="entry name" value="60S RIBOSOMAL PROTEIN L35/50S RIBOSOMAL PROTEIN L29"/>
    <property type="match status" value="1"/>
</dbReference>
<dbReference type="PANTHER" id="PTHR10916:SF0">
    <property type="entry name" value="LARGE RIBOSOMAL SUBUNIT PROTEIN UL29C"/>
    <property type="match status" value="1"/>
</dbReference>
<dbReference type="Pfam" id="PF00831">
    <property type="entry name" value="Ribosomal_L29"/>
    <property type="match status" value="1"/>
</dbReference>
<dbReference type="SUPFAM" id="SSF46561">
    <property type="entry name" value="Ribosomal protein L29 (L29p)"/>
    <property type="match status" value="1"/>
</dbReference>
<dbReference type="PROSITE" id="PS00579">
    <property type="entry name" value="RIBOSOMAL_L29"/>
    <property type="match status" value="1"/>
</dbReference>
<proteinExistence type="inferred from homology"/>
<gene>
    <name evidence="1" type="primary">rpmC</name>
    <name type="ordered locus">HAPS_1614</name>
</gene>
<organism>
    <name type="scientific">Glaesserella parasuis serovar 5 (strain SH0165)</name>
    <name type="common">Haemophilus parasuis</name>
    <dbReference type="NCBI Taxonomy" id="557723"/>
    <lineage>
        <taxon>Bacteria</taxon>
        <taxon>Pseudomonadati</taxon>
        <taxon>Pseudomonadota</taxon>
        <taxon>Gammaproteobacteria</taxon>
        <taxon>Pasteurellales</taxon>
        <taxon>Pasteurellaceae</taxon>
        <taxon>Glaesserella</taxon>
    </lineage>
</organism>
<feature type="chain" id="PRO_1000194021" description="Large ribosomal subunit protein uL29">
    <location>
        <begin position="1"/>
        <end position="63"/>
    </location>
</feature>
<keyword id="KW-1185">Reference proteome</keyword>
<keyword id="KW-0687">Ribonucleoprotein</keyword>
<keyword id="KW-0689">Ribosomal protein</keyword>